<feature type="chain" id="PRO_0000419492" description="Kynurenine formamidase">
    <location>
        <begin position="1"/>
        <end position="300"/>
    </location>
</feature>
<feature type="short sequence motif" description="HGGXW">
    <location>
        <begin position="86"/>
        <end position="90"/>
    </location>
</feature>
<feature type="active site" description="Nucleophile" evidence="1">
    <location>
        <position position="157"/>
    </location>
</feature>
<feature type="active site" evidence="1">
    <location>
        <position position="244"/>
    </location>
</feature>
<feature type="active site" evidence="1">
    <location>
        <position position="276"/>
    </location>
</feature>
<feature type="helix" evidence="6">
    <location>
        <begin position="9"/>
        <end position="12"/>
    </location>
</feature>
<feature type="helix" evidence="6">
    <location>
        <begin position="15"/>
        <end position="18"/>
    </location>
</feature>
<feature type="strand" evidence="5">
    <location>
        <begin position="20"/>
        <end position="22"/>
    </location>
</feature>
<feature type="strand" evidence="5">
    <location>
        <begin position="25"/>
        <end position="27"/>
    </location>
</feature>
<feature type="helix" evidence="6">
    <location>
        <begin position="28"/>
        <end position="49"/>
    </location>
</feature>
<feature type="strand" evidence="6">
    <location>
        <begin position="54"/>
        <end position="59"/>
    </location>
</feature>
<feature type="strand" evidence="6">
    <location>
        <begin position="66"/>
        <end position="71"/>
    </location>
</feature>
<feature type="strand" evidence="6">
    <location>
        <begin position="81"/>
        <end position="85"/>
    </location>
</feature>
<feature type="turn" evidence="6">
    <location>
        <begin position="89"/>
        <end position="91"/>
    </location>
</feature>
<feature type="helix" evidence="6">
    <location>
        <begin position="95"/>
        <end position="97"/>
    </location>
</feature>
<feature type="helix" evidence="6">
    <location>
        <begin position="102"/>
        <end position="107"/>
    </location>
</feature>
<feature type="strand" evidence="6">
    <location>
        <begin position="111"/>
        <end position="115"/>
    </location>
</feature>
<feature type="turn" evidence="6">
    <location>
        <begin position="120"/>
        <end position="122"/>
    </location>
</feature>
<feature type="helix" evidence="6">
    <location>
        <begin position="125"/>
        <end position="145"/>
    </location>
</feature>
<feature type="strand" evidence="6">
    <location>
        <begin position="151"/>
        <end position="155"/>
    </location>
</feature>
<feature type="helix" evidence="6">
    <location>
        <begin position="159"/>
        <end position="163"/>
    </location>
</feature>
<feature type="helix" evidence="6">
    <location>
        <begin position="164"/>
        <end position="168"/>
    </location>
</feature>
<feature type="turn" evidence="6">
    <location>
        <begin position="170"/>
        <end position="172"/>
    </location>
</feature>
<feature type="helix" evidence="6">
    <location>
        <begin position="175"/>
        <end position="179"/>
    </location>
</feature>
<feature type="strand" evidence="6">
    <location>
        <begin position="181"/>
        <end position="188"/>
    </location>
</feature>
<feature type="helix" evidence="6">
    <location>
        <begin position="194"/>
        <end position="197"/>
    </location>
</feature>
<feature type="turn" evidence="6">
    <location>
        <begin position="200"/>
        <end position="202"/>
    </location>
</feature>
<feature type="helix" evidence="6">
    <location>
        <begin position="204"/>
        <end position="206"/>
    </location>
</feature>
<feature type="turn" evidence="6">
    <location>
        <begin position="212"/>
        <end position="218"/>
    </location>
</feature>
<feature type="helix" evidence="6">
    <location>
        <begin position="220"/>
        <end position="222"/>
    </location>
</feature>
<feature type="helix" evidence="6">
    <location>
        <begin position="228"/>
        <end position="231"/>
    </location>
</feature>
<feature type="strand" evidence="6">
    <location>
        <begin position="234"/>
        <end position="244"/>
    </location>
</feature>
<feature type="helix" evidence="6">
    <location>
        <begin position="246"/>
        <end position="262"/>
    </location>
</feature>
<feature type="strand" evidence="6">
    <location>
        <begin position="266"/>
        <end position="275"/>
    </location>
</feature>
<feature type="helix" evidence="6">
    <location>
        <begin position="278"/>
        <end position="281"/>
    </location>
</feature>
<feature type="helix" evidence="6">
    <location>
        <begin position="282"/>
        <end position="284"/>
    </location>
</feature>
<feature type="strand" evidence="4">
    <location>
        <begin position="285"/>
        <end position="288"/>
    </location>
</feature>
<feature type="helix" evidence="6">
    <location>
        <begin position="289"/>
        <end position="298"/>
    </location>
</feature>
<organism>
    <name type="scientific">Drosophila melanogaster</name>
    <name type="common">Fruit fly</name>
    <dbReference type="NCBI Taxonomy" id="7227"/>
    <lineage>
        <taxon>Eukaryota</taxon>
        <taxon>Metazoa</taxon>
        <taxon>Ecdysozoa</taxon>
        <taxon>Arthropoda</taxon>
        <taxon>Hexapoda</taxon>
        <taxon>Insecta</taxon>
        <taxon>Pterygota</taxon>
        <taxon>Neoptera</taxon>
        <taxon>Endopterygota</taxon>
        <taxon>Diptera</taxon>
        <taxon>Brachycera</taxon>
        <taxon>Muscomorpha</taxon>
        <taxon>Ephydroidea</taxon>
        <taxon>Drosophilidae</taxon>
        <taxon>Drosophila</taxon>
        <taxon>Sophophora</taxon>
    </lineage>
</organism>
<name>KFA_DROME</name>
<sequence length="300" mass="34911">MYNPRCKDLDRDYFPSYHTTRFQDQPEPNLAVLEHFVRVTKQHGRELTEKQGITVDHLRYGEGRQLVDVFYSEKTTNQAPLFVFVHGGYWQEMDMSMSCSIVGPLVRRGYRVAVMDYNLCPQVTLEQLMTQFTHFLNWIFDYTEMTKVSSLTFAGHSAGAHLLAQILMRPNVITAQRSKMVWALIFLCGVYDLRELSNLESVNPKNILGLNERNIESVSPMLWEYTDVTVWNSTKIYVVAAEHDSTTFIEQSRHYADVLRKKGYKASFTLFKGYDHFDIIEETAIDDSDVSRFLRNIEIE</sequence>
<accession>Q9VMC9</accession>
<gene>
    <name type="primary">KFase</name>
    <name type="ORF">CG9542</name>
</gene>
<comment type="function">
    <text evidence="1 2 3">Catalyzes the hydrolysis of N-formyl-L-kynurenine to L-kynurenine, the second step in the kynurenine pathway of tryptophan degradation. Required for elimination of toxic metabolites.</text>
</comment>
<comment type="catalytic activity">
    <reaction evidence="1">
        <text>N-formyl-L-kynurenine + H2O = L-kynurenine + formate + H(+)</text>
        <dbReference type="Rhea" id="RHEA:13009"/>
        <dbReference type="ChEBI" id="CHEBI:15377"/>
        <dbReference type="ChEBI" id="CHEBI:15378"/>
        <dbReference type="ChEBI" id="CHEBI:15740"/>
        <dbReference type="ChEBI" id="CHEBI:57959"/>
        <dbReference type="ChEBI" id="CHEBI:58629"/>
        <dbReference type="EC" id="3.5.1.9"/>
    </reaction>
</comment>
<comment type="biophysicochemical properties">
    <kinetics>
        <KM evidence="2">0.32 mM for N-formyl-L-kynurenine</KM>
        <text>kcat is 1584 min(-1) with N-formyl-L-kynurenine as substrate.</text>
    </kinetics>
</comment>
<comment type="pathway">
    <text evidence="1">Amino-acid degradation; L-tryptophan degradation via kynurenine pathway; L-kynurenine from L-tryptophan: step 2/2.</text>
</comment>
<comment type="subunit">
    <text evidence="1 2 3">Homodimer.</text>
</comment>
<comment type="domain">
    <text evidence="1">The main chain amide nitrogen atoms of the second glycine and its adjacent residue in the HGGXW motif define the oxyanion hole, and stabilize the oxyanion that forms during the nucleophilic attack by the catalytic serine during substrate cleavage.</text>
</comment>
<comment type="similarity">
    <text evidence="1">Belongs to the kynurenine formamidase family.</text>
</comment>
<proteinExistence type="evidence at protein level"/>
<dbReference type="EC" id="3.5.1.9" evidence="1"/>
<dbReference type="EMBL" id="AE014134">
    <property type="protein sequence ID" value="AAF52391.1"/>
    <property type="molecule type" value="Genomic_DNA"/>
</dbReference>
<dbReference type="EMBL" id="AY089670">
    <property type="protein sequence ID" value="AAL90408.1"/>
    <property type="molecule type" value="mRNA"/>
</dbReference>
<dbReference type="RefSeq" id="NP_001285676.1">
    <property type="nucleotide sequence ID" value="NM_001298747.1"/>
</dbReference>
<dbReference type="RefSeq" id="NP_609036.1">
    <property type="nucleotide sequence ID" value="NM_135192.2"/>
</dbReference>
<dbReference type="PDB" id="4E11">
    <property type="method" value="X-ray"/>
    <property type="resolution" value="2.00 A"/>
    <property type="chains" value="A=1-300"/>
</dbReference>
<dbReference type="PDB" id="4E14">
    <property type="method" value="X-ray"/>
    <property type="resolution" value="1.64 A"/>
    <property type="chains" value="A=1-300"/>
</dbReference>
<dbReference type="PDB" id="4E15">
    <property type="method" value="X-ray"/>
    <property type="resolution" value="1.50 A"/>
    <property type="chains" value="A/B=1-300"/>
</dbReference>
<dbReference type="PDBsum" id="4E11"/>
<dbReference type="PDBsum" id="4E14"/>
<dbReference type="PDBsum" id="4E15"/>
<dbReference type="SMR" id="Q9VMC9"/>
<dbReference type="BioGRID" id="60064">
    <property type="interactions" value="5"/>
</dbReference>
<dbReference type="FunCoup" id="Q9VMC9">
    <property type="interactions" value="277"/>
</dbReference>
<dbReference type="IntAct" id="Q9VMC9">
    <property type="interactions" value="7"/>
</dbReference>
<dbReference type="STRING" id="7227.FBpp0308832"/>
<dbReference type="ESTHER" id="drome-CG9542">
    <property type="family name" value="Kynurenine-formamidase"/>
</dbReference>
<dbReference type="MEROPS" id="S09.A72"/>
<dbReference type="PaxDb" id="7227-FBpp0078895"/>
<dbReference type="DNASU" id="33907"/>
<dbReference type="EnsemblMetazoa" id="FBtr0079265">
    <property type="protein sequence ID" value="FBpp0078895"/>
    <property type="gene ID" value="FBgn0287695"/>
</dbReference>
<dbReference type="EnsemblMetazoa" id="FBtr0339785">
    <property type="protein sequence ID" value="FBpp0308832"/>
    <property type="gene ID" value="FBgn0287695"/>
</dbReference>
<dbReference type="GeneID" id="33907"/>
<dbReference type="KEGG" id="dme:Dmel_CG9542"/>
<dbReference type="UCSC" id="CG9542-RA">
    <property type="organism name" value="d. melanogaster"/>
</dbReference>
<dbReference type="AGR" id="FB:FBgn0287695"/>
<dbReference type="CTD" id="33907"/>
<dbReference type="FlyBase" id="FBgn0287695">
    <property type="gene designation" value="KFase"/>
</dbReference>
<dbReference type="VEuPathDB" id="VectorBase:FBgn0287695"/>
<dbReference type="eggNOG" id="KOG4627">
    <property type="taxonomic scope" value="Eukaryota"/>
</dbReference>
<dbReference type="HOGENOM" id="CLU_012494_4_7_1"/>
<dbReference type="InParanoid" id="Q9VMC9"/>
<dbReference type="OMA" id="WAVAMPS"/>
<dbReference type="OrthoDB" id="433474at2759"/>
<dbReference type="PhylomeDB" id="Q9VMC9"/>
<dbReference type="BRENDA" id="3.5.1.9">
    <property type="organism ID" value="1994"/>
</dbReference>
<dbReference type="UniPathway" id="UPA00333">
    <property type="reaction ID" value="UER00454"/>
</dbReference>
<dbReference type="BioGRID-ORCS" id="33907">
    <property type="hits" value="0 hits in 1 CRISPR screen"/>
</dbReference>
<dbReference type="EvolutionaryTrace" id="Q9VMC9"/>
<dbReference type="GenomeRNAi" id="33907"/>
<dbReference type="PRO" id="PR:Q9VMC9"/>
<dbReference type="Proteomes" id="UP000000803">
    <property type="component" value="Chromosome 2L"/>
</dbReference>
<dbReference type="Bgee" id="FBgn0031821">
    <property type="expression patterns" value="Expressed in capitellum (Drosophila) and 45 other cell types or tissues"/>
</dbReference>
<dbReference type="ExpressionAtlas" id="Q9VMC9">
    <property type="expression patterns" value="baseline and differential"/>
</dbReference>
<dbReference type="GO" id="GO:0004061">
    <property type="term" value="F:arylformamidase activity"/>
    <property type="evidence" value="ECO:0000314"/>
    <property type="project" value="FlyBase"/>
</dbReference>
<dbReference type="GO" id="GO:0019441">
    <property type="term" value="P:L-tryptophan catabolic process to kynurenine"/>
    <property type="evidence" value="ECO:0007669"/>
    <property type="project" value="UniProtKB-UniRule"/>
</dbReference>
<dbReference type="FunFam" id="3.40.50.1820:FF:000611">
    <property type="entry name" value="Kynurenine formamidase"/>
    <property type="match status" value="1"/>
</dbReference>
<dbReference type="Gene3D" id="3.40.50.1820">
    <property type="entry name" value="alpha/beta hydrolase"/>
    <property type="match status" value="1"/>
</dbReference>
<dbReference type="HAMAP" id="MF_03014">
    <property type="entry name" value="KFase"/>
    <property type="match status" value="1"/>
</dbReference>
<dbReference type="InterPro" id="IPR013094">
    <property type="entry name" value="AB_hydrolase_3"/>
</dbReference>
<dbReference type="InterPro" id="IPR029058">
    <property type="entry name" value="AB_hydrolase_fold"/>
</dbReference>
<dbReference type="InterPro" id="IPR050300">
    <property type="entry name" value="GDXG_lipolytic_enzyme"/>
</dbReference>
<dbReference type="InterPro" id="IPR027519">
    <property type="entry name" value="KFase_ver/fungi-typ"/>
</dbReference>
<dbReference type="PANTHER" id="PTHR48081">
    <property type="entry name" value="AB HYDROLASE SUPERFAMILY PROTEIN C4A8.06C"/>
    <property type="match status" value="1"/>
</dbReference>
<dbReference type="PANTHER" id="PTHR48081:SF33">
    <property type="entry name" value="KYNURENINE FORMAMIDASE"/>
    <property type="match status" value="1"/>
</dbReference>
<dbReference type="Pfam" id="PF07859">
    <property type="entry name" value="Abhydrolase_3"/>
    <property type="match status" value="1"/>
</dbReference>
<dbReference type="SUPFAM" id="SSF53474">
    <property type="entry name" value="alpha/beta-Hydrolases"/>
    <property type="match status" value="1"/>
</dbReference>
<reference key="1">
    <citation type="journal article" date="2000" name="Science">
        <title>The genome sequence of Drosophila melanogaster.</title>
        <authorList>
            <person name="Adams M.D."/>
            <person name="Celniker S.E."/>
            <person name="Holt R.A."/>
            <person name="Evans C.A."/>
            <person name="Gocayne J.D."/>
            <person name="Amanatides P.G."/>
            <person name="Scherer S.E."/>
            <person name="Li P.W."/>
            <person name="Hoskins R.A."/>
            <person name="Galle R.F."/>
            <person name="George R.A."/>
            <person name="Lewis S.E."/>
            <person name="Richards S."/>
            <person name="Ashburner M."/>
            <person name="Henderson S.N."/>
            <person name="Sutton G.G."/>
            <person name="Wortman J.R."/>
            <person name="Yandell M.D."/>
            <person name="Zhang Q."/>
            <person name="Chen L.X."/>
            <person name="Brandon R.C."/>
            <person name="Rogers Y.-H.C."/>
            <person name="Blazej R.G."/>
            <person name="Champe M."/>
            <person name="Pfeiffer B.D."/>
            <person name="Wan K.H."/>
            <person name="Doyle C."/>
            <person name="Baxter E.G."/>
            <person name="Helt G."/>
            <person name="Nelson C.R."/>
            <person name="Miklos G.L.G."/>
            <person name="Abril J.F."/>
            <person name="Agbayani A."/>
            <person name="An H.-J."/>
            <person name="Andrews-Pfannkoch C."/>
            <person name="Baldwin D."/>
            <person name="Ballew R.M."/>
            <person name="Basu A."/>
            <person name="Baxendale J."/>
            <person name="Bayraktaroglu L."/>
            <person name="Beasley E.M."/>
            <person name="Beeson K.Y."/>
            <person name="Benos P.V."/>
            <person name="Berman B.P."/>
            <person name="Bhandari D."/>
            <person name="Bolshakov S."/>
            <person name="Borkova D."/>
            <person name="Botchan M.R."/>
            <person name="Bouck J."/>
            <person name="Brokstein P."/>
            <person name="Brottier P."/>
            <person name="Burtis K.C."/>
            <person name="Busam D.A."/>
            <person name="Butler H."/>
            <person name="Cadieu E."/>
            <person name="Center A."/>
            <person name="Chandra I."/>
            <person name="Cherry J.M."/>
            <person name="Cawley S."/>
            <person name="Dahlke C."/>
            <person name="Davenport L.B."/>
            <person name="Davies P."/>
            <person name="de Pablos B."/>
            <person name="Delcher A."/>
            <person name="Deng Z."/>
            <person name="Mays A.D."/>
            <person name="Dew I."/>
            <person name="Dietz S.M."/>
            <person name="Dodson K."/>
            <person name="Doup L.E."/>
            <person name="Downes M."/>
            <person name="Dugan-Rocha S."/>
            <person name="Dunkov B.C."/>
            <person name="Dunn P."/>
            <person name="Durbin K.J."/>
            <person name="Evangelista C.C."/>
            <person name="Ferraz C."/>
            <person name="Ferriera S."/>
            <person name="Fleischmann W."/>
            <person name="Fosler C."/>
            <person name="Gabrielian A.E."/>
            <person name="Garg N.S."/>
            <person name="Gelbart W.M."/>
            <person name="Glasser K."/>
            <person name="Glodek A."/>
            <person name="Gong F."/>
            <person name="Gorrell J.H."/>
            <person name="Gu Z."/>
            <person name="Guan P."/>
            <person name="Harris M."/>
            <person name="Harris N.L."/>
            <person name="Harvey D.A."/>
            <person name="Heiman T.J."/>
            <person name="Hernandez J.R."/>
            <person name="Houck J."/>
            <person name="Hostin D."/>
            <person name="Houston K.A."/>
            <person name="Howland T.J."/>
            <person name="Wei M.-H."/>
            <person name="Ibegwam C."/>
            <person name="Jalali M."/>
            <person name="Kalush F."/>
            <person name="Karpen G.H."/>
            <person name="Ke Z."/>
            <person name="Kennison J.A."/>
            <person name="Ketchum K.A."/>
            <person name="Kimmel B.E."/>
            <person name="Kodira C.D."/>
            <person name="Kraft C.L."/>
            <person name="Kravitz S."/>
            <person name="Kulp D."/>
            <person name="Lai Z."/>
            <person name="Lasko P."/>
            <person name="Lei Y."/>
            <person name="Levitsky A.A."/>
            <person name="Li J.H."/>
            <person name="Li Z."/>
            <person name="Liang Y."/>
            <person name="Lin X."/>
            <person name="Liu X."/>
            <person name="Mattei B."/>
            <person name="McIntosh T.C."/>
            <person name="McLeod M.P."/>
            <person name="McPherson D."/>
            <person name="Merkulov G."/>
            <person name="Milshina N.V."/>
            <person name="Mobarry C."/>
            <person name="Morris J."/>
            <person name="Moshrefi A."/>
            <person name="Mount S.M."/>
            <person name="Moy M."/>
            <person name="Murphy B."/>
            <person name="Murphy L."/>
            <person name="Muzny D.M."/>
            <person name="Nelson D.L."/>
            <person name="Nelson D.R."/>
            <person name="Nelson K.A."/>
            <person name="Nixon K."/>
            <person name="Nusskern D.R."/>
            <person name="Pacleb J.M."/>
            <person name="Palazzolo M."/>
            <person name="Pittman G.S."/>
            <person name="Pan S."/>
            <person name="Pollard J."/>
            <person name="Puri V."/>
            <person name="Reese M.G."/>
            <person name="Reinert K."/>
            <person name="Remington K."/>
            <person name="Saunders R.D.C."/>
            <person name="Scheeler F."/>
            <person name="Shen H."/>
            <person name="Shue B.C."/>
            <person name="Siden-Kiamos I."/>
            <person name="Simpson M."/>
            <person name="Skupski M.P."/>
            <person name="Smith T.J."/>
            <person name="Spier E."/>
            <person name="Spradling A.C."/>
            <person name="Stapleton M."/>
            <person name="Strong R."/>
            <person name="Sun E."/>
            <person name="Svirskas R."/>
            <person name="Tector C."/>
            <person name="Turner R."/>
            <person name="Venter E."/>
            <person name="Wang A.H."/>
            <person name="Wang X."/>
            <person name="Wang Z.-Y."/>
            <person name="Wassarman D.A."/>
            <person name="Weinstock G.M."/>
            <person name="Weissenbach J."/>
            <person name="Williams S.M."/>
            <person name="Woodage T."/>
            <person name="Worley K.C."/>
            <person name="Wu D."/>
            <person name="Yang S."/>
            <person name="Yao Q.A."/>
            <person name="Ye J."/>
            <person name="Yeh R.-F."/>
            <person name="Zaveri J.S."/>
            <person name="Zhan M."/>
            <person name="Zhang G."/>
            <person name="Zhao Q."/>
            <person name="Zheng L."/>
            <person name="Zheng X.H."/>
            <person name="Zhong F.N."/>
            <person name="Zhong W."/>
            <person name="Zhou X."/>
            <person name="Zhu S.C."/>
            <person name="Zhu X."/>
            <person name="Smith H.O."/>
            <person name="Gibbs R.A."/>
            <person name="Myers E.W."/>
            <person name="Rubin G.M."/>
            <person name="Venter J.C."/>
        </authorList>
    </citation>
    <scope>NUCLEOTIDE SEQUENCE [LARGE SCALE GENOMIC DNA]</scope>
    <source>
        <strain>Berkeley</strain>
    </source>
</reference>
<reference key="2">
    <citation type="journal article" date="2002" name="Genome Biol.">
        <title>Annotation of the Drosophila melanogaster euchromatic genome: a systematic review.</title>
        <authorList>
            <person name="Misra S."/>
            <person name="Crosby M.A."/>
            <person name="Mungall C.J."/>
            <person name="Matthews B.B."/>
            <person name="Campbell K.S."/>
            <person name="Hradecky P."/>
            <person name="Huang Y."/>
            <person name="Kaminker J.S."/>
            <person name="Millburn G.H."/>
            <person name="Prochnik S.E."/>
            <person name="Smith C.D."/>
            <person name="Tupy J.L."/>
            <person name="Whitfield E.J."/>
            <person name="Bayraktaroglu L."/>
            <person name="Berman B.P."/>
            <person name="Bettencourt B.R."/>
            <person name="Celniker S.E."/>
            <person name="de Grey A.D.N.J."/>
            <person name="Drysdale R.A."/>
            <person name="Harris N.L."/>
            <person name="Richter J."/>
            <person name="Russo S."/>
            <person name="Schroeder A.J."/>
            <person name="Shu S.Q."/>
            <person name="Stapleton M."/>
            <person name="Yamada C."/>
            <person name="Ashburner M."/>
            <person name="Gelbart W.M."/>
            <person name="Rubin G.M."/>
            <person name="Lewis S.E."/>
        </authorList>
    </citation>
    <scope>GENOME REANNOTATION</scope>
    <source>
        <strain>Berkeley</strain>
    </source>
</reference>
<reference key="3">
    <citation type="journal article" date="2002" name="Genome Biol.">
        <title>A Drosophila full-length cDNA resource.</title>
        <authorList>
            <person name="Stapleton M."/>
            <person name="Carlson J.W."/>
            <person name="Brokstein P."/>
            <person name="Yu C."/>
            <person name="Champe M."/>
            <person name="George R.A."/>
            <person name="Guarin H."/>
            <person name="Kronmiller B."/>
            <person name="Pacleb J.M."/>
            <person name="Park S."/>
            <person name="Wan K.H."/>
            <person name="Rubin G.M."/>
            <person name="Celniker S.E."/>
        </authorList>
    </citation>
    <scope>NUCLEOTIDE SEQUENCE [LARGE SCALE MRNA]</scope>
    <source>
        <strain>Berkeley</strain>
    </source>
</reference>
<reference key="4">
    <citation type="journal article" date="1978" name="Biochem. Genet.">
        <title>Biochemical and genetic characterization of kynurenine formamidase from Drosophila melanogaster.</title>
        <authorList>
            <person name="Moore G.P."/>
            <person name="Sullivan D.T."/>
        </authorList>
    </citation>
    <scope>FUNCTION</scope>
    <scope>SUBUNIT</scope>
</reference>
<reference key="5">
    <citation type="journal article" date="2012" name="Biochem. J.">
        <title>Biochemical identification and crystal structure of kynurenine formamidase from Drosophila melanogaster.</title>
        <authorList>
            <person name="Han Q."/>
            <person name="Robinson H."/>
            <person name="Li J."/>
        </authorList>
    </citation>
    <scope>X-RAY CRYSTALLOGRAPHY (1.5 ANGSTROMS) OF 1-300 IN COMPLEX WITH INHIBITOR</scope>
    <scope>FUNCTION</scope>
    <scope>BIOPHYSICOCHEMICAL PROPERTIES</scope>
</reference>
<protein>
    <recommendedName>
        <fullName evidence="1">Kynurenine formamidase</fullName>
        <shortName evidence="1">KFA</shortName>
        <shortName evidence="1">KFase</shortName>
        <ecNumber evidence="1">3.5.1.9</ecNumber>
    </recommendedName>
    <alternativeName>
        <fullName evidence="1">Arylformamidase</fullName>
    </alternativeName>
    <alternativeName>
        <fullName evidence="1">N-formylkynurenine formamidase</fullName>
        <shortName evidence="1">FKF</shortName>
    </alternativeName>
</protein>
<keyword id="KW-0002">3D-structure</keyword>
<keyword id="KW-0378">Hydrolase</keyword>
<keyword id="KW-1185">Reference proteome</keyword>
<keyword id="KW-0823">Tryptophan catabolism</keyword>
<evidence type="ECO:0000255" key="1">
    <source>
        <dbReference type="HAMAP-Rule" id="MF_03014"/>
    </source>
</evidence>
<evidence type="ECO:0000269" key="2">
    <source>
    </source>
</evidence>
<evidence type="ECO:0000269" key="3">
    <source>
    </source>
</evidence>
<evidence type="ECO:0007829" key="4">
    <source>
        <dbReference type="PDB" id="4E11"/>
    </source>
</evidence>
<evidence type="ECO:0007829" key="5">
    <source>
        <dbReference type="PDB" id="4E14"/>
    </source>
</evidence>
<evidence type="ECO:0007829" key="6">
    <source>
        <dbReference type="PDB" id="4E15"/>
    </source>
</evidence>